<organism>
    <name type="scientific">Escherichia coli O157:H7</name>
    <dbReference type="NCBI Taxonomy" id="83334"/>
    <lineage>
        <taxon>Bacteria</taxon>
        <taxon>Pseudomonadati</taxon>
        <taxon>Pseudomonadota</taxon>
        <taxon>Gammaproteobacteria</taxon>
        <taxon>Enterobacterales</taxon>
        <taxon>Enterobacteriaceae</taxon>
        <taxon>Escherichia</taxon>
    </lineage>
</organism>
<dbReference type="EC" id="3.1.13.-" evidence="1"/>
<dbReference type="EMBL" id="AE005174">
    <property type="protein sequence ID" value="AAG56641.1"/>
    <property type="molecule type" value="Genomic_DNA"/>
</dbReference>
<dbReference type="EMBL" id="BA000007">
    <property type="protein sequence ID" value="BAB35784.1"/>
    <property type="molecule type" value="Genomic_DNA"/>
</dbReference>
<dbReference type="PIR" id="A90924">
    <property type="entry name" value="A90924"/>
</dbReference>
<dbReference type="PIR" id="E85772">
    <property type="entry name" value="E85772"/>
</dbReference>
<dbReference type="RefSeq" id="NP_310388.1">
    <property type="nucleotide sequence ID" value="NC_002695.1"/>
</dbReference>
<dbReference type="RefSeq" id="WP_001282281.1">
    <property type="nucleotide sequence ID" value="NZ_VOAI01000007.1"/>
</dbReference>
<dbReference type="SMR" id="P66682"/>
<dbReference type="STRING" id="155864.Z2671"/>
<dbReference type="GeneID" id="914111"/>
<dbReference type="GeneID" id="93775806"/>
<dbReference type="KEGG" id="ece:Z2671"/>
<dbReference type="KEGG" id="ecs:ECs_2361"/>
<dbReference type="PATRIC" id="fig|386585.9.peg.2470"/>
<dbReference type="eggNOG" id="COG0847">
    <property type="taxonomic scope" value="Bacteria"/>
</dbReference>
<dbReference type="HOGENOM" id="CLU_082724_0_0_6"/>
<dbReference type="OMA" id="CYMVNHL"/>
<dbReference type="Proteomes" id="UP000000558">
    <property type="component" value="Chromosome"/>
</dbReference>
<dbReference type="Proteomes" id="UP000002519">
    <property type="component" value="Chromosome"/>
</dbReference>
<dbReference type="GO" id="GO:0005829">
    <property type="term" value="C:cytosol"/>
    <property type="evidence" value="ECO:0007669"/>
    <property type="project" value="TreeGrafter"/>
</dbReference>
<dbReference type="GO" id="GO:0008408">
    <property type="term" value="F:3'-5' exonuclease activity"/>
    <property type="evidence" value="ECO:0007669"/>
    <property type="project" value="TreeGrafter"/>
</dbReference>
<dbReference type="GO" id="GO:0000287">
    <property type="term" value="F:magnesium ion binding"/>
    <property type="evidence" value="ECO:0007669"/>
    <property type="project" value="UniProtKB-UniRule"/>
</dbReference>
<dbReference type="GO" id="GO:0003676">
    <property type="term" value="F:nucleic acid binding"/>
    <property type="evidence" value="ECO:0007669"/>
    <property type="project" value="InterPro"/>
</dbReference>
<dbReference type="GO" id="GO:0016896">
    <property type="term" value="F:RNA exonuclease activity, producing 5'-phosphomonoesters"/>
    <property type="evidence" value="ECO:0007669"/>
    <property type="project" value="UniProtKB-UniRule"/>
</dbReference>
<dbReference type="GO" id="GO:0045004">
    <property type="term" value="P:DNA replication proofreading"/>
    <property type="evidence" value="ECO:0007669"/>
    <property type="project" value="TreeGrafter"/>
</dbReference>
<dbReference type="GO" id="GO:0008033">
    <property type="term" value="P:tRNA processing"/>
    <property type="evidence" value="ECO:0007669"/>
    <property type="project" value="UniProtKB-KW"/>
</dbReference>
<dbReference type="CDD" id="cd06134">
    <property type="entry name" value="RNaseT"/>
    <property type="match status" value="1"/>
</dbReference>
<dbReference type="FunFam" id="3.30.420.10:FF:000009">
    <property type="entry name" value="Ribonuclease T"/>
    <property type="match status" value="1"/>
</dbReference>
<dbReference type="Gene3D" id="3.30.420.10">
    <property type="entry name" value="Ribonuclease H-like superfamily/Ribonuclease H"/>
    <property type="match status" value="1"/>
</dbReference>
<dbReference type="HAMAP" id="MF_00157">
    <property type="entry name" value="RNase_T"/>
    <property type="match status" value="1"/>
</dbReference>
<dbReference type="InterPro" id="IPR013520">
    <property type="entry name" value="Exonuclease_RNaseT/DNA_pol3"/>
</dbReference>
<dbReference type="InterPro" id="IPR005987">
    <property type="entry name" value="RNase_T"/>
</dbReference>
<dbReference type="InterPro" id="IPR012337">
    <property type="entry name" value="RNaseH-like_sf"/>
</dbReference>
<dbReference type="InterPro" id="IPR036397">
    <property type="entry name" value="RNaseH_sf"/>
</dbReference>
<dbReference type="NCBIfam" id="TIGR01298">
    <property type="entry name" value="RNaseT"/>
    <property type="match status" value="1"/>
</dbReference>
<dbReference type="PANTHER" id="PTHR30231">
    <property type="entry name" value="DNA POLYMERASE III SUBUNIT EPSILON"/>
    <property type="match status" value="1"/>
</dbReference>
<dbReference type="PANTHER" id="PTHR30231:SF2">
    <property type="entry name" value="RIBONUCLEASE T"/>
    <property type="match status" value="1"/>
</dbReference>
<dbReference type="Pfam" id="PF00929">
    <property type="entry name" value="RNase_T"/>
    <property type="match status" value="1"/>
</dbReference>
<dbReference type="SMART" id="SM00479">
    <property type="entry name" value="EXOIII"/>
    <property type="match status" value="1"/>
</dbReference>
<dbReference type="SUPFAM" id="SSF53098">
    <property type="entry name" value="Ribonuclease H-like"/>
    <property type="match status" value="1"/>
</dbReference>
<feature type="chain" id="PRO_0000208962" description="Ribonuclease T">
    <location>
        <begin position="1"/>
        <end position="215"/>
    </location>
</feature>
<feature type="domain" description="Exonuclease" evidence="1">
    <location>
        <begin position="20"/>
        <end position="194"/>
    </location>
</feature>
<feature type="active site" description="Proton donor/acceptor" evidence="1">
    <location>
        <position position="181"/>
    </location>
</feature>
<feature type="binding site" evidence="1">
    <location>
        <position position="23"/>
    </location>
    <ligand>
        <name>Mg(2+)</name>
        <dbReference type="ChEBI" id="CHEBI:18420"/>
        <label>1</label>
        <note>catalytic</note>
    </ligand>
</feature>
<feature type="binding site" evidence="1">
    <location>
        <position position="23"/>
    </location>
    <ligand>
        <name>Mg(2+)</name>
        <dbReference type="ChEBI" id="CHEBI:18420"/>
        <label>2</label>
        <note>catalytic</note>
    </ligand>
</feature>
<feature type="binding site" evidence="1">
    <location>
        <position position="25"/>
    </location>
    <ligand>
        <name>Mg(2+)</name>
        <dbReference type="ChEBI" id="CHEBI:18420"/>
        <label>2</label>
        <note>catalytic</note>
    </ligand>
</feature>
<feature type="binding site" evidence="1">
    <location>
        <position position="181"/>
    </location>
    <ligand>
        <name>Mg(2+)</name>
        <dbReference type="ChEBI" id="CHEBI:18420"/>
        <label>2</label>
        <note>catalytic</note>
    </ligand>
</feature>
<feature type="binding site" evidence="1">
    <location>
        <position position="186"/>
    </location>
    <ligand>
        <name>Mg(2+)</name>
        <dbReference type="ChEBI" id="CHEBI:18420"/>
        <label>2</label>
        <note>catalytic</note>
    </ligand>
</feature>
<feature type="site" description="Important for substrate binding and specificity" evidence="1">
    <location>
        <position position="29"/>
    </location>
</feature>
<feature type="site" description="Important for substrate binding and specificity" evidence="1">
    <location>
        <position position="77"/>
    </location>
</feature>
<feature type="site" description="Important for substrate binding and specificity" evidence="1">
    <location>
        <position position="124"/>
    </location>
</feature>
<feature type="site" description="Important for substrate binding and specificity" evidence="1">
    <location>
        <position position="146"/>
    </location>
</feature>
<protein>
    <recommendedName>
        <fullName evidence="1">Ribonuclease T</fullName>
        <ecNumber evidence="1">3.1.13.-</ecNumber>
    </recommendedName>
    <alternativeName>
        <fullName evidence="1">Exoribonuclease T</fullName>
        <shortName evidence="1">RNase T</shortName>
    </alternativeName>
</protein>
<comment type="function">
    <text evidence="1">Trims short 3' overhangs of a variety of RNA species, leaving a one or two nucleotide 3' overhang. Responsible for the end-turnover of tRNA: specifically removes the terminal AMP residue from uncharged tRNA (tRNA-C-C-A). Also appears to be involved in tRNA biosynthesis.</text>
</comment>
<comment type="cofactor">
    <cofactor evidence="1">
        <name>Mg(2+)</name>
        <dbReference type="ChEBI" id="CHEBI:18420"/>
    </cofactor>
    <text evidence="1">Binds two Mg(2+) per subunit. The active form of the enzyme binds two Mg(2+) ions in its active site. The first Mg(2+) forms only one salt bridge with the protein.</text>
</comment>
<comment type="subunit">
    <text evidence="1">Homodimer.</text>
</comment>
<comment type="similarity">
    <text evidence="1">Belongs to the RNase T family.</text>
</comment>
<reference key="1">
    <citation type="journal article" date="2001" name="Nature">
        <title>Genome sequence of enterohaemorrhagic Escherichia coli O157:H7.</title>
        <authorList>
            <person name="Perna N.T."/>
            <person name="Plunkett G. III"/>
            <person name="Burland V."/>
            <person name="Mau B."/>
            <person name="Glasner J.D."/>
            <person name="Rose D.J."/>
            <person name="Mayhew G.F."/>
            <person name="Evans P.S."/>
            <person name="Gregor J."/>
            <person name="Kirkpatrick H.A."/>
            <person name="Posfai G."/>
            <person name="Hackett J."/>
            <person name="Klink S."/>
            <person name="Boutin A."/>
            <person name="Shao Y."/>
            <person name="Miller L."/>
            <person name="Grotbeck E.J."/>
            <person name="Davis N.W."/>
            <person name="Lim A."/>
            <person name="Dimalanta E.T."/>
            <person name="Potamousis K."/>
            <person name="Apodaca J."/>
            <person name="Anantharaman T.S."/>
            <person name="Lin J."/>
            <person name="Yen G."/>
            <person name="Schwartz D.C."/>
            <person name="Welch R.A."/>
            <person name="Blattner F.R."/>
        </authorList>
    </citation>
    <scope>NUCLEOTIDE SEQUENCE [LARGE SCALE GENOMIC DNA]</scope>
    <source>
        <strain>O157:H7 / EDL933 / ATCC 700927 / EHEC</strain>
    </source>
</reference>
<reference key="2">
    <citation type="journal article" date="2001" name="DNA Res.">
        <title>Complete genome sequence of enterohemorrhagic Escherichia coli O157:H7 and genomic comparison with a laboratory strain K-12.</title>
        <authorList>
            <person name="Hayashi T."/>
            <person name="Makino K."/>
            <person name="Ohnishi M."/>
            <person name="Kurokawa K."/>
            <person name="Ishii K."/>
            <person name="Yokoyama K."/>
            <person name="Han C.-G."/>
            <person name="Ohtsubo E."/>
            <person name="Nakayama K."/>
            <person name="Murata T."/>
            <person name="Tanaka M."/>
            <person name="Tobe T."/>
            <person name="Iida T."/>
            <person name="Takami H."/>
            <person name="Honda T."/>
            <person name="Sasakawa C."/>
            <person name="Ogasawara N."/>
            <person name="Yasunaga T."/>
            <person name="Kuhara S."/>
            <person name="Shiba T."/>
            <person name="Hattori M."/>
            <person name="Shinagawa H."/>
        </authorList>
    </citation>
    <scope>NUCLEOTIDE SEQUENCE [LARGE SCALE GENOMIC DNA]</scope>
    <source>
        <strain>O157:H7 / Sakai / RIMD 0509952 / EHEC</strain>
    </source>
</reference>
<accession>P66682</accession>
<accession>Q8X627</accession>
<name>RNT_ECO57</name>
<gene>
    <name evidence="1" type="primary">rnt</name>
    <name type="ordered locus">Z2671</name>
    <name type="ordered locus">ECs2361</name>
</gene>
<keyword id="KW-0269">Exonuclease</keyword>
<keyword id="KW-0378">Hydrolase</keyword>
<keyword id="KW-0460">Magnesium</keyword>
<keyword id="KW-0479">Metal-binding</keyword>
<keyword id="KW-0540">Nuclease</keyword>
<keyword id="KW-1185">Reference proteome</keyword>
<keyword id="KW-0819">tRNA processing</keyword>
<sequence length="215" mass="23533">MSDNAQLTGLCDRFRGFYPVVIDVETAGFNAKTDALLEIAAITLKMDEQGWLMPDTTLHFHVEPFVGANLQPEALAFNGIDPNDPDRGAVSEYEALHEIFKVVRKGIKASGCNRAIMVAHNANFDHSFMMAAAERASLKRNPFHPFATFDTAALAGLALGQTVLSKACQTAGMDFDSTQAHSALYDTERTAVLFCEIVNRWKRLGGWPLPAAEEV</sequence>
<proteinExistence type="inferred from homology"/>
<evidence type="ECO:0000255" key="1">
    <source>
        <dbReference type="HAMAP-Rule" id="MF_00157"/>
    </source>
</evidence>